<comment type="subcellular location">
    <subcellularLocation>
        <location evidence="1">Cytoplasm</location>
    </subcellularLocation>
</comment>
<comment type="induction">
    <text>By heat shock.</text>
</comment>
<comment type="similarity">
    <text evidence="2">Belongs to the small heat shock protein (HSP20) family.</text>
</comment>
<gene>
    <name type="primary">SHSP-2</name>
</gene>
<reference key="1">
    <citation type="journal article" date="1992" name="Plant Physiol.">
        <title>Structure and light-induced expression of a small heat shock gene of Pharbitis nil.</title>
        <authorList>
            <person name="Krishna P."/>
            <person name="Felsheim R.F."/>
            <person name="Larkin J.C."/>
            <person name="Das A."/>
        </authorList>
    </citation>
    <scope>NUCLEOTIDE SEQUENCE [GENOMIC DNA]</scope>
    <source>
        <tissue>Cotyledon</tissue>
    </source>
</reference>
<name>HSP22_IPONI</name>
<evidence type="ECO:0000250" key="1"/>
<evidence type="ECO:0000255" key="2">
    <source>
        <dbReference type="PROSITE-ProRule" id="PRU00285"/>
    </source>
</evidence>
<dbReference type="EMBL" id="M99430">
    <property type="protein sequence ID" value="AAB39336.1"/>
    <property type="molecule type" value="Genomic_DNA"/>
</dbReference>
<dbReference type="SMR" id="Q01545"/>
<dbReference type="GO" id="GO:0005737">
    <property type="term" value="C:cytoplasm"/>
    <property type="evidence" value="ECO:0007669"/>
    <property type="project" value="UniProtKB-SubCell"/>
</dbReference>
<dbReference type="CDD" id="cd06464">
    <property type="entry name" value="ACD_sHsps-like"/>
    <property type="match status" value="1"/>
</dbReference>
<dbReference type="FunFam" id="2.60.40.790:FF:000010">
    <property type="entry name" value="17.3 kDa class II heat shock protein-like"/>
    <property type="match status" value="1"/>
</dbReference>
<dbReference type="Gene3D" id="2.60.40.790">
    <property type="match status" value="1"/>
</dbReference>
<dbReference type="InterPro" id="IPR002068">
    <property type="entry name" value="A-crystallin/Hsp20_dom"/>
</dbReference>
<dbReference type="InterPro" id="IPR008978">
    <property type="entry name" value="HSP20-like_chaperone"/>
</dbReference>
<dbReference type="InterPro" id="IPR031107">
    <property type="entry name" value="Small_HSP"/>
</dbReference>
<dbReference type="PANTHER" id="PTHR11527">
    <property type="entry name" value="HEAT-SHOCK PROTEIN 20 FAMILY MEMBER"/>
    <property type="match status" value="1"/>
</dbReference>
<dbReference type="Pfam" id="PF00011">
    <property type="entry name" value="HSP20"/>
    <property type="match status" value="1"/>
</dbReference>
<dbReference type="SUPFAM" id="SSF49764">
    <property type="entry name" value="HSP20-like chaperones"/>
    <property type="match status" value="1"/>
</dbReference>
<dbReference type="PROSITE" id="PS01031">
    <property type="entry name" value="SHSP"/>
    <property type="match status" value="1"/>
</dbReference>
<keyword id="KW-0963">Cytoplasm</keyword>
<keyword id="KW-0346">Stress response</keyword>
<proteinExistence type="evidence at transcript level"/>
<feature type="chain" id="PRO_0000125998" description="18.8 kDa class II heat shock protein">
    <location>
        <begin position="1"/>
        <end position="167"/>
    </location>
</feature>
<feature type="domain" description="sHSP" evidence="2">
    <location>
        <begin position="49"/>
        <end position="167"/>
    </location>
</feature>
<protein>
    <recommendedName>
        <fullName>18.8 kDa class II heat shock protein</fullName>
    </recommendedName>
</protein>
<sequence length="167" mass="18772">MDLRNFGLSNFGLEPQLLSTIQDMLDFADDHDRAGRAPPEQPIRAYVRDAKAMAATPADVKEYPNSYVFIADMPGVKAAEIKVQVEDDNVLVVSGERTEREKDEKDGVKYLRMERRVGKFMRKFVLPENANVEAINAVYQDGVLQVTVEKLPPPEPKKPKTVEVKVA</sequence>
<organism>
    <name type="scientific">Ipomoea nil</name>
    <name type="common">Japanese morning glory</name>
    <name type="synonym">Pharbitis nil</name>
    <dbReference type="NCBI Taxonomy" id="35883"/>
    <lineage>
        <taxon>Eukaryota</taxon>
        <taxon>Viridiplantae</taxon>
        <taxon>Streptophyta</taxon>
        <taxon>Embryophyta</taxon>
        <taxon>Tracheophyta</taxon>
        <taxon>Spermatophyta</taxon>
        <taxon>Magnoliopsida</taxon>
        <taxon>eudicotyledons</taxon>
        <taxon>Gunneridae</taxon>
        <taxon>Pentapetalae</taxon>
        <taxon>asterids</taxon>
        <taxon>lamiids</taxon>
        <taxon>Solanales</taxon>
        <taxon>Convolvulaceae</taxon>
        <taxon>Ipomoeeae</taxon>
        <taxon>Ipomoea</taxon>
    </lineage>
</organism>
<accession>Q01545</accession>